<organism evidence="13">
    <name type="scientific">Drosophila melanogaster</name>
    <name type="common">Fruit fly</name>
    <dbReference type="NCBI Taxonomy" id="7227"/>
    <lineage>
        <taxon>Eukaryota</taxon>
        <taxon>Metazoa</taxon>
        <taxon>Ecdysozoa</taxon>
        <taxon>Arthropoda</taxon>
        <taxon>Hexapoda</taxon>
        <taxon>Insecta</taxon>
        <taxon>Pterygota</taxon>
        <taxon>Neoptera</taxon>
        <taxon>Endopterygota</taxon>
        <taxon>Diptera</taxon>
        <taxon>Brachycera</taxon>
        <taxon>Muscomorpha</taxon>
        <taxon>Ephydroidea</taxon>
        <taxon>Drosophilidae</taxon>
        <taxon>Drosophila</taxon>
        <taxon>Sophophora</taxon>
    </lineage>
</organism>
<feature type="chain" id="PRO_0000459439" description="Exosome complex component 10 homolog">
    <location>
        <begin position="1"/>
        <end position="900"/>
    </location>
</feature>
<feature type="domain" description="3'-5' exonuclease" evidence="2">
    <location>
        <begin position="273"/>
        <end position="438"/>
    </location>
</feature>
<feature type="domain" description="HRDC" evidence="3">
    <location>
        <begin position="485"/>
        <end position="565"/>
    </location>
</feature>
<feature type="region of interest" description="Disordered" evidence="4">
    <location>
        <begin position="1"/>
        <end position="31"/>
    </location>
</feature>
<feature type="region of interest" description="Disordered" evidence="4">
    <location>
        <begin position="147"/>
        <end position="174"/>
    </location>
</feature>
<feature type="region of interest" description="Disordered" evidence="4">
    <location>
        <begin position="731"/>
        <end position="900"/>
    </location>
</feature>
<feature type="compositionally biased region" description="Basic and acidic residues" evidence="4">
    <location>
        <begin position="8"/>
        <end position="28"/>
    </location>
</feature>
<feature type="compositionally biased region" description="Basic residues" evidence="4">
    <location>
        <begin position="809"/>
        <end position="826"/>
    </location>
</feature>
<feature type="compositionally biased region" description="Low complexity" evidence="4">
    <location>
        <begin position="878"/>
        <end position="887"/>
    </location>
</feature>
<feature type="binding site" evidence="1">
    <location>
        <position position="296"/>
    </location>
    <ligand>
        <name>Mg(2+)</name>
        <dbReference type="ChEBI" id="CHEBI:18420"/>
        <label>1</label>
    </ligand>
</feature>
<feature type="binding site" evidence="1">
    <location>
        <position position="296"/>
    </location>
    <ligand>
        <name>Mg(2+)</name>
        <dbReference type="ChEBI" id="CHEBI:18420"/>
        <label>2</label>
    </ligand>
</feature>
<feature type="binding site" evidence="1">
    <location>
        <position position="298"/>
    </location>
    <ligand>
        <name>Mg(2+)</name>
        <dbReference type="ChEBI" id="CHEBI:18420"/>
        <label>2</label>
    </ligand>
</feature>
<feature type="binding site" evidence="1">
    <location>
        <position position="354"/>
    </location>
    <ligand>
        <name>Mg(2+)</name>
        <dbReference type="ChEBI" id="CHEBI:18420"/>
        <label>1</label>
    </ligand>
</feature>
<feature type="binding site" evidence="1">
    <location>
        <position position="423"/>
    </location>
    <ligand>
        <name>Mg(2+)</name>
        <dbReference type="ChEBI" id="CHEBI:18420"/>
        <label>2</label>
    </ligand>
</feature>
<feature type="mutagenesis site" description="Causes accumulation of transcripts derived from retrotransposon and repeat sequences." evidence="8">
    <original>D</original>
    <variation>A</variation>
    <location>
        <position position="296"/>
    </location>
</feature>
<feature type="mutagenesis site" description="Results in reduced growth rate of the cells after irradiation. Reduces Rrp6-mediated recruitment of spn-A to DNA double-strand breaks and efficiency of DNA repair. Does not affect the abundance of spn-A. Does not inhibit interaction with spn-A. Causes accumulation of transcripts derived from retrotransposon and repeat sequences." evidence="7 8">
    <original>Y</original>
    <variation>A</variation>
    <location>
        <position position="419"/>
    </location>
</feature>
<feature type="sequence conflict" description="In Ref. 3; ACD81847." evidence="10" ref="3">
    <original>A</original>
    <variation>P</variation>
    <location>
        <position position="703"/>
    </location>
</feature>
<name>EXOSX_DROME</name>
<reference evidence="13" key="1">
    <citation type="journal article" date="2000" name="Science">
        <title>The genome sequence of Drosophila melanogaster.</title>
        <authorList>
            <person name="Adams M.D."/>
            <person name="Celniker S.E."/>
            <person name="Holt R.A."/>
            <person name="Evans C.A."/>
            <person name="Gocayne J.D."/>
            <person name="Amanatides P.G."/>
            <person name="Scherer S.E."/>
            <person name="Li P.W."/>
            <person name="Hoskins R.A."/>
            <person name="Galle R.F."/>
            <person name="George R.A."/>
            <person name="Lewis S.E."/>
            <person name="Richards S."/>
            <person name="Ashburner M."/>
            <person name="Henderson S.N."/>
            <person name="Sutton G.G."/>
            <person name="Wortman J.R."/>
            <person name="Yandell M.D."/>
            <person name="Zhang Q."/>
            <person name="Chen L.X."/>
            <person name="Brandon R.C."/>
            <person name="Rogers Y.-H.C."/>
            <person name="Blazej R.G."/>
            <person name="Champe M."/>
            <person name="Pfeiffer B.D."/>
            <person name="Wan K.H."/>
            <person name="Doyle C."/>
            <person name="Baxter E.G."/>
            <person name="Helt G."/>
            <person name="Nelson C.R."/>
            <person name="Miklos G.L.G."/>
            <person name="Abril J.F."/>
            <person name="Agbayani A."/>
            <person name="An H.-J."/>
            <person name="Andrews-Pfannkoch C."/>
            <person name="Baldwin D."/>
            <person name="Ballew R.M."/>
            <person name="Basu A."/>
            <person name="Baxendale J."/>
            <person name="Bayraktaroglu L."/>
            <person name="Beasley E.M."/>
            <person name="Beeson K.Y."/>
            <person name="Benos P.V."/>
            <person name="Berman B.P."/>
            <person name="Bhandari D."/>
            <person name="Bolshakov S."/>
            <person name="Borkova D."/>
            <person name="Botchan M.R."/>
            <person name="Bouck J."/>
            <person name="Brokstein P."/>
            <person name="Brottier P."/>
            <person name="Burtis K.C."/>
            <person name="Busam D.A."/>
            <person name="Butler H."/>
            <person name="Cadieu E."/>
            <person name="Center A."/>
            <person name="Chandra I."/>
            <person name="Cherry J.M."/>
            <person name="Cawley S."/>
            <person name="Dahlke C."/>
            <person name="Davenport L.B."/>
            <person name="Davies P."/>
            <person name="de Pablos B."/>
            <person name="Delcher A."/>
            <person name="Deng Z."/>
            <person name="Mays A.D."/>
            <person name="Dew I."/>
            <person name="Dietz S.M."/>
            <person name="Dodson K."/>
            <person name="Doup L.E."/>
            <person name="Downes M."/>
            <person name="Dugan-Rocha S."/>
            <person name="Dunkov B.C."/>
            <person name="Dunn P."/>
            <person name="Durbin K.J."/>
            <person name="Evangelista C.C."/>
            <person name="Ferraz C."/>
            <person name="Ferriera S."/>
            <person name="Fleischmann W."/>
            <person name="Fosler C."/>
            <person name="Gabrielian A.E."/>
            <person name="Garg N.S."/>
            <person name="Gelbart W.M."/>
            <person name="Glasser K."/>
            <person name="Glodek A."/>
            <person name="Gong F."/>
            <person name="Gorrell J.H."/>
            <person name="Gu Z."/>
            <person name="Guan P."/>
            <person name="Harris M."/>
            <person name="Harris N.L."/>
            <person name="Harvey D.A."/>
            <person name="Heiman T.J."/>
            <person name="Hernandez J.R."/>
            <person name="Houck J."/>
            <person name="Hostin D."/>
            <person name="Houston K.A."/>
            <person name="Howland T.J."/>
            <person name="Wei M.-H."/>
            <person name="Ibegwam C."/>
            <person name="Jalali M."/>
            <person name="Kalush F."/>
            <person name="Karpen G.H."/>
            <person name="Ke Z."/>
            <person name="Kennison J.A."/>
            <person name="Ketchum K.A."/>
            <person name="Kimmel B.E."/>
            <person name="Kodira C.D."/>
            <person name="Kraft C.L."/>
            <person name="Kravitz S."/>
            <person name="Kulp D."/>
            <person name="Lai Z."/>
            <person name="Lasko P."/>
            <person name="Lei Y."/>
            <person name="Levitsky A.A."/>
            <person name="Li J.H."/>
            <person name="Li Z."/>
            <person name="Liang Y."/>
            <person name="Lin X."/>
            <person name="Liu X."/>
            <person name="Mattei B."/>
            <person name="McIntosh T.C."/>
            <person name="McLeod M.P."/>
            <person name="McPherson D."/>
            <person name="Merkulov G."/>
            <person name="Milshina N.V."/>
            <person name="Mobarry C."/>
            <person name="Morris J."/>
            <person name="Moshrefi A."/>
            <person name="Mount S.M."/>
            <person name="Moy M."/>
            <person name="Murphy B."/>
            <person name="Murphy L."/>
            <person name="Muzny D.M."/>
            <person name="Nelson D.L."/>
            <person name="Nelson D.R."/>
            <person name="Nelson K.A."/>
            <person name="Nixon K."/>
            <person name="Nusskern D.R."/>
            <person name="Pacleb J.M."/>
            <person name="Palazzolo M."/>
            <person name="Pittman G.S."/>
            <person name="Pan S."/>
            <person name="Pollard J."/>
            <person name="Puri V."/>
            <person name="Reese M.G."/>
            <person name="Reinert K."/>
            <person name="Remington K."/>
            <person name="Saunders R.D.C."/>
            <person name="Scheeler F."/>
            <person name="Shen H."/>
            <person name="Shue B.C."/>
            <person name="Siden-Kiamos I."/>
            <person name="Simpson M."/>
            <person name="Skupski M.P."/>
            <person name="Smith T.J."/>
            <person name="Spier E."/>
            <person name="Spradling A.C."/>
            <person name="Stapleton M."/>
            <person name="Strong R."/>
            <person name="Sun E."/>
            <person name="Svirskas R."/>
            <person name="Tector C."/>
            <person name="Turner R."/>
            <person name="Venter E."/>
            <person name="Wang A.H."/>
            <person name="Wang X."/>
            <person name="Wang Z.-Y."/>
            <person name="Wassarman D.A."/>
            <person name="Weinstock G.M."/>
            <person name="Weissenbach J."/>
            <person name="Williams S.M."/>
            <person name="Woodage T."/>
            <person name="Worley K.C."/>
            <person name="Wu D."/>
            <person name="Yang S."/>
            <person name="Yao Q.A."/>
            <person name="Ye J."/>
            <person name="Yeh R.-F."/>
            <person name="Zaveri J.S."/>
            <person name="Zhan M."/>
            <person name="Zhang G."/>
            <person name="Zhao Q."/>
            <person name="Zheng L."/>
            <person name="Zheng X.H."/>
            <person name="Zhong F.N."/>
            <person name="Zhong W."/>
            <person name="Zhou X."/>
            <person name="Zhu S.C."/>
            <person name="Zhu X."/>
            <person name="Smith H.O."/>
            <person name="Gibbs R.A."/>
            <person name="Myers E.W."/>
            <person name="Rubin G.M."/>
            <person name="Venter J.C."/>
        </authorList>
    </citation>
    <scope>NUCLEOTIDE SEQUENCE [LARGE SCALE GENOMIC DNA]</scope>
    <source>
        <strain evidence="13">Berkeley</strain>
    </source>
</reference>
<reference evidence="13" key="2">
    <citation type="journal article" date="2002" name="Genome Biol.">
        <title>Annotation of the Drosophila melanogaster euchromatic genome: a systematic review.</title>
        <authorList>
            <person name="Misra S."/>
            <person name="Crosby M.A."/>
            <person name="Mungall C.J."/>
            <person name="Matthews B.B."/>
            <person name="Campbell K.S."/>
            <person name="Hradecky P."/>
            <person name="Huang Y."/>
            <person name="Kaminker J.S."/>
            <person name="Millburn G.H."/>
            <person name="Prochnik S.E."/>
            <person name="Smith C.D."/>
            <person name="Tupy J.L."/>
            <person name="Whitfield E.J."/>
            <person name="Bayraktaroglu L."/>
            <person name="Berman B.P."/>
            <person name="Bettencourt B.R."/>
            <person name="Celniker S.E."/>
            <person name="de Grey A.D.N.J."/>
            <person name="Drysdale R.A."/>
            <person name="Harris N.L."/>
            <person name="Richter J."/>
            <person name="Russo S."/>
            <person name="Schroeder A.J."/>
            <person name="Shu S.Q."/>
            <person name="Stapleton M."/>
            <person name="Yamada C."/>
            <person name="Ashburner M."/>
            <person name="Gelbart W.M."/>
            <person name="Rubin G.M."/>
            <person name="Lewis S.E."/>
        </authorList>
    </citation>
    <scope>GENOME REANNOTATION</scope>
    <source>
        <strain evidence="13">Berkeley</strain>
    </source>
</reference>
<reference evidence="11" key="3">
    <citation type="submission" date="2008-05" db="EMBL/GenBank/DDBJ databases">
        <authorList>
            <person name="Carlson J."/>
            <person name="Booth B."/>
            <person name="Frise E."/>
            <person name="Park S."/>
            <person name="Wan K."/>
            <person name="Yu C."/>
            <person name="Celniker S."/>
        </authorList>
    </citation>
    <scope>NUCLEOTIDE SEQUENCE [LARGE SCALE MRNA]</scope>
    <source>
        <strain evidence="11">Berkeley</strain>
    </source>
</reference>
<reference evidence="10" key="4">
    <citation type="journal article" date="2009" name="Mol. Biol. Cell">
        <title>Core exosome-independent roles for Rrp6 in cell cycle progression.</title>
        <authorList>
            <person name="Graham A.C."/>
            <person name="Kiss D.L."/>
            <person name="Andrulis E.D."/>
        </authorList>
    </citation>
    <scope>FUNCTION</scope>
    <scope>SUBCELLULAR LOCATION</scope>
</reference>
<reference evidence="10" key="5">
    <citation type="journal article" date="2011" name="Mol. Cancer Res.">
        <title>The incorporation of 5-fluorouracil into RNA affects the ribonucleolytic activity of the exosome subunit Rrp6.</title>
        <authorList>
            <person name="Silverstein R.A."/>
            <person name="Gonzalez de Valdivia E."/>
            <person name="Visa N."/>
        </authorList>
    </citation>
    <scope>CATALYTIC ACTIVITY</scope>
    <scope>SUBCELLULAR LOCATION</scope>
    <scope>MISCELLANEOUS</scope>
</reference>
<reference evidence="10" key="6">
    <citation type="journal article" date="2015" name="J. Cell Sci.">
        <title>RRP6/EXOSC10 is required for the repair of DNA double-strand breaks by homologous recombination.</title>
        <authorList>
            <person name="Marin-Vicente C."/>
            <person name="Domingo-Prim J."/>
            <person name="Eberle A.B."/>
            <person name="Visa N."/>
        </authorList>
    </citation>
    <scope>FUNCTION</scope>
    <scope>INTERACTION WITH SPN-A</scope>
    <scope>SUBCELLULAR LOCATION</scope>
    <scope>MUTAGENESIS OF TYR-419</scope>
</reference>
<reference evidence="10" key="7">
    <citation type="journal article" date="2015" name="PLoS Genet.">
        <title>An Interaction between RRP6 and SU(VAR)3-9 Targets RRP6 to Heterochromatin and Contributes to Heterochromatin Maintenance in Drosophila melanogaster.</title>
        <authorList>
            <person name="Eberle A.B."/>
            <person name="Jordan-Pla A."/>
            <person name="Ganez-Zapater A."/>
            <person name="Hessle V."/>
            <person name="Silberberg G."/>
            <person name="von Euler A."/>
            <person name="Silverstein R.A."/>
            <person name="Visa N."/>
        </authorList>
    </citation>
    <scope>FUNCTION</scope>
    <scope>INTERACTION WITH SU(VAR)3-9; SU(VAR)205 AND HDAC1</scope>
    <scope>SUBCELLULAR LOCATION</scope>
    <scope>TISSUE SPECIFICITY</scope>
    <scope>MUTAGENESIS OF ASP-296 AND TYR-419</scope>
</reference>
<gene>
    <name evidence="12" type="primary">Rrp6</name>
    <name evidence="12" type="ORF">CG7292</name>
</gene>
<dbReference type="EC" id="3.1.13.-" evidence="6"/>
<dbReference type="EMBL" id="AE014297">
    <property type="protein sequence ID" value="AAF55107.3"/>
    <property type="molecule type" value="Genomic_DNA"/>
</dbReference>
<dbReference type="EMBL" id="AE014297">
    <property type="protein sequence ID" value="AHN57329.1"/>
    <property type="molecule type" value="Genomic_DNA"/>
</dbReference>
<dbReference type="EMBL" id="BT032833">
    <property type="protein sequence ID" value="ACD81847.1"/>
    <property type="status" value="ALT_INIT"/>
    <property type="molecule type" value="mRNA"/>
</dbReference>
<dbReference type="EMBL" id="BT133386">
    <property type="protein sequence ID" value="AFH41845.1"/>
    <property type="status" value="ALT_INIT"/>
    <property type="molecule type" value="mRNA"/>
</dbReference>
<dbReference type="RefSeq" id="NP_001097795.1">
    <property type="nucleotide sequence ID" value="NM_001104325.2"/>
</dbReference>
<dbReference type="RefSeq" id="NP_001287330.1">
    <property type="nucleotide sequence ID" value="NM_001300401.1"/>
</dbReference>
<dbReference type="SMR" id="Q9VFF3"/>
<dbReference type="ComplexPortal" id="CPX-2595">
    <property type="entry name" value="Nuclear exosome"/>
</dbReference>
<dbReference type="FunCoup" id="Q9VFF3">
    <property type="interactions" value="2466"/>
</dbReference>
<dbReference type="IntAct" id="Q9VFF3">
    <property type="interactions" value="42"/>
</dbReference>
<dbReference type="STRING" id="7227.FBpp0311911"/>
<dbReference type="PaxDb" id="7227-FBpp0112147"/>
<dbReference type="EnsemblMetazoa" id="FBtr0113235">
    <property type="protein sequence ID" value="FBpp0112147"/>
    <property type="gene ID" value="FBgn0038269"/>
</dbReference>
<dbReference type="EnsemblMetazoa" id="FBtr0346063">
    <property type="protein sequence ID" value="FBpp0311911"/>
    <property type="gene ID" value="FBgn0038269"/>
</dbReference>
<dbReference type="GeneID" id="41798"/>
<dbReference type="KEGG" id="dme:Dmel_CG7292"/>
<dbReference type="UCSC" id="CG7292-RB">
    <property type="organism name" value="d. melanogaster"/>
</dbReference>
<dbReference type="AGR" id="FB:FBgn0038269"/>
<dbReference type="CTD" id="41798"/>
<dbReference type="FlyBase" id="FBgn0038269">
    <property type="gene designation" value="Rrp6"/>
</dbReference>
<dbReference type="VEuPathDB" id="VectorBase:FBgn0038269"/>
<dbReference type="eggNOG" id="KOG2206">
    <property type="taxonomic scope" value="Eukaryota"/>
</dbReference>
<dbReference type="GeneTree" id="ENSGT00390000015408"/>
<dbReference type="HOGENOM" id="CLU_010129_1_0_1"/>
<dbReference type="InParanoid" id="Q9VFF3"/>
<dbReference type="OMA" id="NIMRPQM"/>
<dbReference type="OrthoDB" id="2250022at2759"/>
<dbReference type="Reactome" id="R-DME-6791226">
    <property type="pathway name" value="Major pathway of rRNA processing in the nucleolus and cytosol"/>
</dbReference>
<dbReference type="BioGRID-ORCS" id="41798">
    <property type="hits" value="1 hit in 1 CRISPR screen"/>
</dbReference>
<dbReference type="GenomeRNAi" id="41798"/>
<dbReference type="PRO" id="PR:Q9VFF3"/>
<dbReference type="Proteomes" id="UP000000803">
    <property type="component" value="Chromosome 3R"/>
</dbReference>
<dbReference type="Bgee" id="FBgn0038269">
    <property type="expression patterns" value="Expressed in early elongation stage spermatid (Drosophila) in testis and 72 other cell types or tissues"/>
</dbReference>
<dbReference type="ExpressionAtlas" id="Q9VFF3">
    <property type="expression patterns" value="baseline and differential"/>
</dbReference>
<dbReference type="GO" id="GO:0005938">
    <property type="term" value="C:cell cortex"/>
    <property type="evidence" value="ECO:0007669"/>
    <property type="project" value="UniProtKB-SubCell"/>
</dbReference>
<dbReference type="GO" id="GO:0005813">
    <property type="term" value="C:centrosome"/>
    <property type="evidence" value="ECO:0007669"/>
    <property type="project" value="UniProtKB-SubCell"/>
</dbReference>
<dbReference type="GO" id="GO:0005694">
    <property type="term" value="C:chromosome"/>
    <property type="evidence" value="ECO:0007669"/>
    <property type="project" value="UniProtKB-SubCell"/>
</dbReference>
<dbReference type="GO" id="GO:0030496">
    <property type="term" value="C:midbody"/>
    <property type="evidence" value="ECO:0007669"/>
    <property type="project" value="UniProtKB-SubCell"/>
</dbReference>
<dbReference type="GO" id="GO:0000176">
    <property type="term" value="C:nuclear exosome (RNase complex)"/>
    <property type="evidence" value="ECO:0000314"/>
    <property type="project" value="FlyBase"/>
</dbReference>
<dbReference type="GO" id="GO:0005652">
    <property type="term" value="C:nuclear lamina"/>
    <property type="evidence" value="ECO:0000314"/>
    <property type="project" value="FlyBase"/>
</dbReference>
<dbReference type="GO" id="GO:0005730">
    <property type="term" value="C:nucleolus"/>
    <property type="evidence" value="ECO:0000314"/>
    <property type="project" value="FlyBase"/>
</dbReference>
<dbReference type="GO" id="GO:0005634">
    <property type="term" value="C:nucleus"/>
    <property type="evidence" value="ECO:0000314"/>
    <property type="project" value="FlyBase"/>
</dbReference>
<dbReference type="GO" id="GO:0005819">
    <property type="term" value="C:spindle"/>
    <property type="evidence" value="ECO:0007669"/>
    <property type="project" value="UniProtKB-SubCell"/>
</dbReference>
<dbReference type="GO" id="GO:0000175">
    <property type="term" value="F:3'-5'-RNA exonuclease activity"/>
    <property type="evidence" value="ECO:0000318"/>
    <property type="project" value="GO_Central"/>
</dbReference>
<dbReference type="GO" id="GO:0046872">
    <property type="term" value="F:metal ion binding"/>
    <property type="evidence" value="ECO:0007669"/>
    <property type="project" value="UniProtKB-KW"/>
</dbReference>
<dbReference type="GO" id="GO:0000166">
    <property type="term" value="F:nucleotide binding"/>
    <property type="evidence" value="ECO:0007669"/>
    <property type="project" value="InterPro"/>
</dbReference>
<dbReference type="GO" id="GO:0003727">
    <property type="term" value="F:single-stranded RNA binding"/>
    <property type="evidence" value="ECO:0000318"/>
    <property type="project" value="GO_Central"/>
</dbReference>
<dbReference type="GO" id="GO:0051301">
    <property type="term" value="P:cell division"/>
    <property type="evidence" value="ECO:0007669"/>
    <property type="project" value="UniProtKB-KW"/>
</dbReference>
<dbReference type="GO" id="GO:0007059">
    <property type="term" value="P:chromosome segregation"/>
    <property type="evidence" value="ECO:0000315"/>
    <property type="project" value="FlyBase"/>
</dbReference>
<dbReference type="GO" id="GO:0051607">
    <property type="term" value="P:defense response to virus"/>
    <property type="evidence" value="ECO:0000315"/>
    <property type="project" value="FlyBase"/>
</dbReference>
<dbReference type="GO" id="GO:0006281">
    <property type="term" value="P:DNA repair"/>
    <property type="evidence" value="ECO:0007669"/>
    <property type="project" value="UniProtKB-KW"/>
</dbReference>
<dbReference type="GO" id="GO:0000467">
    <property type="term" value="P:exonucleolytic trimming to generate mature 3'-end of 5.8S rRNA from tricistronic rRNA transcript (SSU-rRNA, 5.8S rRNA, LSU-rRNA)"/>
    <property type="evidence" value="ECO:0000318"/>
    <property type="project" value="GO_Central"/>
</dbReference>
<dbReference type="GO" id="GO:0071044">
    <property type="term" value="P:histone mRNA catabolic process"/>
    <property type="evidence" value="ECO:0000318"/>
    <property type="project" value="GO_Central"/>
</dbReference>
<dbReference type="GO" id="GO:0000278">
    <property type="term" value="P:mitotic cell cycle"/>
    <property type="evidence" value="ECO:0000315"/>
    <property type="project" value="FlyBase"/>
</dbReference>
<dbReference type="GO" id="GO:0071040">
    <property type="term" value="P:nuclear polyadenylation-dependent antisense transcript catabolic process"/>
    <property type="evidence" value="ECO:0000318"/>
    <property type="project" value="GO_Central"/>
</dbReference>
<dbReference type="GO" id="GO:0071039">
    <property type="term" value="P:nuclear polyadenylation-dependent CUT catabolic process"/>
    <property type="evidence" value="ECO:0000318"/>
    <property type="project" value="GO_Central"/>
</dbReference>
<dbReference type="GO" id="GO:0071035">
    <property type="term" value="P:nuclear polyadenylation-dependent rRNA catabolic process"/>
    <property type="evidence" value="ECO:0000318"/>
    <property type="project" value="GO_Central"/>
</dbReference>
<dbReference type="GO" id="GO:0071036">
    <property type="term" value="P:nuclear polyadenylation-dependent snoRNA catabolic process"/>
    <property type="evidence" value="ECO:0000318"/>
    <property type="project" value="GO_Central"/>
</dbReference>
<dbReference type="GO" id="GO:0071037">
    <property type="term" value="P:nuclear polyadenylation-dependent snRNA catabolic process"/>
    <property type="evidence" value="ECO:0000318"/>
    <property type="project" value="GO_Central"/>
</dbReference>
<dbReference type="GO" id="GO:0071027">
    <property type="term" value="P:nuclear RNA surveillance"/>
    <property type="evidence" value="ECO:0000315"/>
    <property type="project" value="FlyBase"/>
</dbReference>
<dbReference type="GO" id="GO:0071051">
    <property type="term" value="P:poly(A)-dependent snoRNA 3'-end processing"/>
    <property type="evidence" value="ECO:0000318"/>
    <property type="project" value="GO_Central"/>
</dbReference>
<dbReference type="GO" id="GO:0010468">
    <property type="term" value="P:regulation of gene expression"/>
    <property type="evidence" value="ECO:0000315"/>
    <property type="project" value="FlyBase"/>
</dbReference>
<dbReference type="GO" id="GO:0071038">
    <property type="term" value="P:TRAMP-dependent tRNA surveillance pathway"/>
    <property type="evidence" value="ECO:0000318"/>
    <property type="project" value="GO_Central"/>
</dbReference>
<dbReference type="CDD" id="cd06147">
    <property type="entry name" value="Rrp6p_like_exo"/>
    <property type="match status" value="1"/>
</dbReference>
<dbReference type="FunFam" id="3.30.420.10:FF:000059">
    <property type="entry name" value="Exosome complex exonuclease Rrp6"/>
    <property type="match status" value="1"/>
</dbReference>
<dbReference type="FunFam" id="1.10.150.80:FF:000001">
    <property type="entry name" value="Putative exosome component 10"/>
    <property type="match status" value="1"/>
</dbReference>
<dbReference type="Gene3D" id="1.10.150.80">
    <property type="entry name" value="HRDC domain"/>
    <property type="match status" value="1"/>
</dbReference>
<dbReference type="Gene3D" id="3.30.420.10">
    <property type="entry name" value="Ribonuclease H-like superfamily/Ribonuclease H"/>
    <property type="match status" value="1"/>
</dbReference>
<dbReference type="InterPro" id="IPR002562">
    <property type="entry name" value="3'-5'_exonuclease_dom"/>
</dbReference>
<dbReference type="InterPro" id="IPR012588">
    <property type="entry name" value="Exosome-assoc_fac_Rrp6_N"/>
</dbReference>
<dbReference type="InterPro" id="IPR010997">
    <property type="entry name" value="HRDC-like_sf"/>
</dbReference>
<dbReference type="InterPro" id="IPR002121">
    <property type="entry name" value="HRDC_dom"/>
</dbReference>
<dbReference type="InterPro" id="IPR044876">
    <property type="entry name" value="HRDC_dom_sf"/>
</dbReference>
<dbReference type="InterPro" id="IPR012337">
    <property type="entry name" value="RNaseH-like_sf"/>
</dbReference>
<dbReference type="InterPro" id="IPR036397">
    <property type="entry name" value="RNaseH_sf"/>
</dbReference>
<dbReference type="InterPro" id="IPR045092">
    <property type="entry name" value="Rrp6-like"/>
</dbReference>
<dbReference type="InterPro" id="IPR049559">
    <property type="entry name" value="Rrp6p-like_exo"/>
</dbReference>
<dbReference type="PANTHER" id="PTHR12124:SF47">
    <property type="entry name" value="EXOSOME COMPONENT 10"/>
    <property type="match status" value="1"/>
</dbReference>
<dbReference type="PANTHER" id="PTHR12124">
    <property type="entry name" value="POLYMYOSITIS/SCLERODERMA AUTOANTIGEN-RELATED"/>
    <property type="match status" value="1"/>
</dbReference>
<dbReference type="Pfam" id="PF01612">
    <property type="entry name" value="DNA_pol_A_exo1"/>
    <property type="match status" value="1"/>
</dbReference>
<dbReference type="Pfam" id="PF00570">
    <property type="entry name" value="HRDC"/>
    <property type="match status" value="1"/>
</dbReference>
<dbReference type="Pfam" id="PF08066">
    <property type="entry name" value="PMC2NT"/>
    <property type="match status" value="1"/>
</dbReference>
<dbReference type="SMART" id="SM00474">
    <property type="entry name" value="35EXOc"/>
    <property type="match status" value="1"/>
</dbReference>
<dbReference type="SMART" id="SM00341">
    <property type="entry name" value="HRDC"/>
    <property type="match status" value="1"/>
</dbReference>
<dbReference type="SUPFAM" id="SSF47819">
    <property type="entry name" value="HRDC-like"/>
    <property type="match status" value="1"/>
</dbReference>
<dbReference type="SUPFAM" id="SSF53098">
    <property type="entry name" value="Ribonuclease H-like"/>
    <property type="match status" value="1"/>
</dbReference>
<dbReference type="PROSITE" id="PS50967">
    <property type="entry name" value="HRDC"/>
    <property type="match status" value="1"/>
</dbReference>
<protein>
    <recommendedName>
        <fullName evidence="10">Exosome complex component 10 homolog</fullName>
        <shortName evidence="9">RRP6/EXOSC10</shortName>
        <ecNumber evidence="6">3.1.13.-</ecNumber>
    </recommendedName>
</protein>
<accession>Q9VFF3</accession>
<accession>B3DN45</accession>
<accession>H9ZYN8</accession>
<keyword id="KW-0131">Cell cycle</keyword>
<keyword id="KW-0132">Cell division</keyword>
<keyword id="KW-0158">Chromosome</keyword>
<keyword id="KW-0963">Cytoplasm</keyword>
<keyword id="KW-0206">Cytoskeleton</keyword>
<keyword id="KW-0227">DNA damage</keyword>
<keyword id="KW-0234">DNA repair</keyword>
<keyword id="KW-0269">Exonuclease</keyword>
<keyword id="KW-0271">Exosome</keyword>
<keyword id="KW-0378">Hydrolase</keyword>
<keyword id="KW-0460">Magnesium</keyword>
<keyword id="KW-0479">Metal-binding</keyword>
<keyword id="KW-0498">Mitosis</keyword>
<keyword id="KW-0540">Nuclease</keyword>
<keyword id="KW-0539">Nucleus</keyword>
<keyword id="KW-1185">Reference proteome</keyword>
<keyword id="KW-0694">RNA-binding</keyword>
<keyword id="KW-0698">rRNA processing</keyword>
<proteinExistence type="evidence at protein level"/>
<comment type="function">
    <text evidence="1 5 7 8">Catalytic component of the RNA exosome complex which has 3'-&gt;5' exoribonuclease activity and participates in a multitude of cellular RNA processing and degradation events (By similarity). Degrades a large variety of non-coding RNAs that are processed by the exosome, such as pre-rRNAs and some small nucleolar RNAs (snoRNAs) (PubMed:26389589). Degrades transcripts derived from different types of heterochromatic repeats, such as subtelomeric minisatellites and simple gagaa repeats (PubMed:26389589). Degrades transcripts derived from transposons and transposon fragments (PubMed:26389589). Degrades chromatin-associated transcripts and contributes to the compaction of heterochromatin (PubMed:26389589). Required for the efficient repair of DNA double-strand breaks via homologous recombination after irradiation (PubMed:25632158). Required for cell proliferation and error-free mitosis (PubMed:19225159).</text>
</comment>
<comment type="cofactor">
    <cofactor evidence="1">
        <name>Mg(2+)</name>
        <dbReference type="ChEBI" id="CHEBI:18420"/>
    </cofactor>
</comment>
<comment type="subunit">
    <text evidence="1 7 8">Component of the RNA exosome complex (By similarity). Interacts with spn-A/Rad51; the interaction is required for the recruitment of spn-A to the DNA-damage response foci (PubMed:25632158). Interacts with Su(var)3-9, a heterochromatin factor; the interaction promotes association of Rrp6 with a subset of genomic loci (PubMed:26389589). Interacts with Su(var)205, a heterochromatin factor (PubMed:26389589). Interacts with HDAC1, a heterochromatin factor (PubMed:26389589).</text>
</comment>
<comment type="subcellular location">
    <subcellularLocation>
        <location evidence="5 6 7">Nucleus</location>
    </subcellularLocation>
    <subcellularLocation>
        <location evidence="5 8">Chromosome</location>
    </subcellularLocation>
    <subcellularLocation>
        <location evidence="5">Cytoplasm</location>
    </subcellularLocation>
    <subcellularLocation>
        <location evidence="5">Cytoplasm</location>
        <location evidence="5">Cell cortex</location>
    </subcellularLocation>
    <subcellularLocation>
        <location evidence="5">Cytoplasm</location>
        <location evidence="5">Cytoskeleton</location>
        <location evidence="5">Microtubule organizing center</location>
        <location evidence="5">Centrosome</location>
    </subcellularLocation>
    <subcellularLocation>
        <location evidence="5">Cytoplasm</location>
        <location evidence="5">Cytoskeleton</location>
        <location evidence="5">Spindle</location>
    </subcellularLocation>
    <subcellularLocation>
        <location evidence="5">Midbody</location>
    </subcellularLocation>
    <text evidence="5 7 8">Relocates to the DNA double-strand breaks in response to irradiation, the relocalization is dependent on the activity of the DNA-damage response (DDR) kinases tefu/ATM and mei-41/ATR (PubMed:25632158). Associates with heterochromatic regions, e.g. telomeres and chromocenter, in polytene chromosomes (PubMed:26389589). Distribution during mitosis is dynamic. In prophase, protein is found either in the nucleus or it redistributes to the cytoplasm and separating centrosomes, accumulating on the pericentriolar material. At prometaphase, it is detected on the condensed chromosomes. In metaphase, it localizes to either the spindle and presumptive perichromosomal layer or to the condensing chromosomes. At anaphase, protein transitions exclusively to the chromosomes. During telophase, it associates with the spindle remnant or both the chromosomes and the spindle remnant. During cytokinesis, it is observed on the midbody, astral microtubules, the pericentriolar material and cell cortex, yet is not enriched in the nascently forming nuclei (PubMed:19225159).</text>
</comment>
<comment type="tissue specificity">
    <text evidence="8">Salivary gland (at protein level).</text>
</comment>
<comment type="miscellaneous">
    <text evidence="6">rRNA synthesized in the presence of 5-fluorouracil, a pyrimidine analog used in the treatment of solid tumors, is not efficiently degraded by Rrp6.</text>
</comment>
<comment type="similarity">
    <text evidence="10">Belongs to the exosome component 10/RRP6 family.</text>
</comment>
<comment type="sequence caution" evidence="10">
    <conflict type="erroneous initiation">
        <sequence resource="EMBL-CDS" id="ACD81847"/>
    </conflict>
    <text>Extended N-terminus.</text>
</comment>
<comment type="sequence caution" evidence="10">
    <conflict type="erroneous initiation">
        <sequence resource="EMBL-CDS" id="AFH41845"/>
    </conflict>
    <text>Extended N-terminus.</text>
</comment>
<sequence length="900" mass="102918">MPRTPKRVHQEAKEESAQADQPPKKSASEDVEAFTNKGFKNAIAATKAANAFPQGTARALYLSYPGYARVMEDLTQRVVALIGNVLHSKDIKGDIKKRQPEEQFEMVQECNDVLFERITTNLDIKGGLRRNTQQVVEAQVDVMSSSTSIEPAVASPQTQGTPKAGSWNRTTGTPQRSMVSARLFTAKNIVRPQTQFREPVDNSAQNPFVPRLKEKPNSLKPLALLPEYDDAGNVQSYLHPYEFELLKFQPPEEQFQKQKPVLPALMAETELMVVDTVEKLKQALEELRQAPQIAIDVEHHSYRTFMGITCLVQMSTRSKDYIFDTLILRDDMHILNLVLTDPKKLKILHGADLDIEWLQRDLSLYIVNMFDTHRAAKALNMARLSLAYLLKHYLDLDVDKSLQLADWRMRPLPQQLVDYARQDTHFLIYVYGRMTNDLLQQHAEPGLLGSVYQQSTDVCKKRYNKPHIGPESHLDLVRKTKRSFDNRQLYALRGIFEWRDATARSEDESYGYVLPNHMMLQIAESLPREMQGILACCNPIPPLVRQQLHTLHQIVLKARDQPLVKPILEAHSSTQAALPPSTKDFSSKLYCPHDFSQLEEIRDDLPTLLKRNSTTGKLEVPNKEEVAKVDPTLAAPAMALFEKQSKPTQEEEQRWAHLRKESQTMRMPYKRYLAILPLMVQLKADQLARERSELQKRQLCPAAPTVEQNIKLEAHAIGKEDDDMYSVPLKEQLKRKHPQANVKTDPEQQPTASKRPRKDENSQTKPPVKIEPVEKVQQALGESDDEVVEVPIERQATEPPKPSPAQNNRKQKKNQFQRGFKAKNRGNHPQSSSQQVPQHKGTGNFDYKNVDFRQFKGGAQRARGTEIKQQIRGKNRPNNRNNKQFNKLFTFSNVRKEGKK</sequence>
<evidence type="ECO:0000250" key="1">
    <source>
        <dbReference type="UniProtKB" id="Q01780"/>
    </source>
</evidence>
<evidence type="ECO:0000255" key="2"/>
<evidence type="ECO:0000255" key="3">
    <source>
        <dbReference type="PROSITE-ProRule" id="PRU00328"/>
    </source>
</evidence>
<evidence type="ECO:0000256" key="4">
    <source>
        <dbReference type="SAM" id="MobiDB-lite"/>
    </source>
</evidence>
<evidence type="ECO:0000269" key="5">
    <source>
    </source>
</evidence>
<evidence type="ECO:0000269" key="6">
    <source>
    </source>
</evidence>
<evidence type="ECO:0000269" key="7">
    <source>
    </source>
</evidence>
<evidence type="ECO:0000269" key="8">
    <source>
    </source>
</evidence>
<evidence type="ECO:0000303" key="9">
    <source>
    </source>
</evidence>
<evidence type="ECO:0000305" key="10"/>
<evidence type="ECO:0000312" key="11">
    <source>
        <dbReference type="EMBL" id="ACD81847.1"/>
    </source>
</evidence>
<evidence type="ECO:0000312" key="12">
    <source>
        <dbReference type="FlyBase" id="FBgn0038269"/>
    </source>
</evidence>
<evidence type="ECO:0000312" key="13">
    <source>
        <dbReference type="Proteomes" id="UP000000803"/>
    </source>
</evidence>